<organism>
    <name type="scientific">Streptomyces griseus subsp. griseus (strain JCM 4626 / CBS 651.72 / NBRC 13350 / KCC S-0626 / ISP 5235)</name>
    <dbReference type="NCBI Taxonomy" id="455632"/>
    <lineage>
        <taxon>Bacteria</taxon>
        <taxon>Bacillati</taxon>
        <taxon>Actinomycetota</taxon>
        <taxon>Actinomycetes</taxon>
        <taxon>Kitasatosporales</taxon>
        <taxon>Streptomycetaceae</taxon>
        <taxon>Streptomyces</taxon>
    </lineage>
</organism>
<keyword id="KW-0488">Methylation</keyword>
<keyword id="KW-0687">Ribonucleoprotein</keyword>
<keyword id="KW-0689">Ribosomal protein</keyword>
<keyword id="KW-0694">RNA-binding</keyword>
<keyword id="KW-0699">rRNA-binding</keyword>
<keyword id="KW-0820">tRNA-binding</keyword>
<evidence type="ECO:0000250" key="1"/>
<evidence type="ECO:0000255" key="2">
    <source>
        <dbReference type="HAMAP-Rule" id="MF_00403"/>
    </source>
</evidence>
<evidence type="ECO:0000256" key="3">
    <source>
        <dbReference type="SAM" id="MobiDB-lite"/>
    </source>
</evidence>
<evidence type="ECO:0000305" key="4"/>
<protein>
    <recommendedName>
        <fullName evidence="2">Small ribosomal subunit protein uS12</fullName>
    </recommendedName>
    <alternativeName>
        <fullName evidence="4">30S ribosomal protein S12</fullName>
    </alternativeName>
</protein>
<sequence>MPTIQQLVRKGRQDKVEKNKTPALEGSPQRRGVCTRVFTTTPKKPNSALRKVARVRLTSGIEVTAYIPGEGHNLQEHSIVLVRGGRVKDLPGVRYKIIRGSLDTQGVKNRKQARSRYGAKKEK</sequence>
<reference key="1">
    <citation type="journal article" date="2008" name="J. Bacteriol.">
        <title>Genome sequence of the streptomycin-producing microorganism Streptomyces griseus IFO 13350.</title>
        <authorList>
            <person name="Ohnishi Y."/>
            <person name="Ishikawa J."/>
            <person name="Hara H."/>
            <person name="Suzuki H."/>
            <person name="Ikenoya M."/>
            <person name="Ikeda H."/>
            <person name="Yamashita A."/>
            <person name="Hattori M."/>
            <person name="Horinouchi S."/>
        </authorList>
    </citation>
    <scope>NUCLEOTIDE SEQUENCE [LARGE SCALE GENOMIC DNA]</scope>
    <source>
        <strain>JCM 4626 / CBS 651.72 / NBRC 13350 / KCC S-0626 / ISP 5235</strain>
    </source>
</reference>
<feature type="chain" id="PRO_1000123521" description="Small ribosomal subunit protein uS12">
    <location>
        <begin position="1"/>
        <end position="123"/>
    </location>
</feature>
<feature type="region of interest" description="Disordered" evidence="3">
    <location>
        <begin position="1"/>
        <end position="30"/>
    </location>
</feature>
<feature type="compositionally biased region" description="Basic and acidic residues" evidence="3">
    <location>
        <begin position="11"/>
        <end position="20"/>
    </location>
</feature>
<feature type="modified residue" description="3-methylthioaspartic acid" evidence="1">
    <location>
        <position position="89"/>
    </location>
</feature>
<accession>B1W419</accession>
<comment type="function">
    <text evidence="2">With S4 and S5 plays an important role in translational accuracy.</text>
</comment>
<comment type="function">
    <text evidence="2">Interacts with and stabilizes bases of the 16S rRNA that are involved in tRNA selection in the A site and with the mRNA backbone. Located at the interface of the 30S and 50S subunits, it traverses the body of the 30S subunit contacting proteins on the other side and probably holding the rRNA structure together. The combined cluster of proteins S8, S12 and S17 appears to hold together the shoulder and platform of the 30S subunit.</text>
</comment>
<comment type="subunit">
    <text evidence="2">Part of the 30S ribosomal subunit. Contacts proteins S8 and S17. May interact with IF1 in the 30S initiation complex.</text>
</comment>
<comment type="similarity">
    <text evidence="2">Belongs to the universal ribosomal protein uS12 family.</text>
</comment>
<gene>
    <name evidence="2" type="primary">rpsL</name>
    <name type="ordered locus">SGR_2846</name>
</gene>
<proteinExistence type="inferred from homology"/>
<name>RS12_STRGG</name>
<dbReference type="EMBL" id="AP009493">
    <property type="protein sequence ID" value="BAG19675.1"/>
    <property type="molecule type" value="Genomic_DNA"/>
</dbReference>
<dbReference type="RefSeq" id="WP_003948652.1">
    <property type="nucleotide sequence ID" value="NC_010572.1"/>
</dbReference>
<dbReference type="SMR" id="B1W419"/>
<dbReference type="GeneID" id="97760361"/>
<dbReference type="KEGG" id="sgr:SGR_2846"/>
<dbReference type="eggNOG" id="COG0048">
    <property type="taxonomic scope" value="Bacteria"/>
</dbReference>
<dbReference type="HOGENOM" id="CLU_104295_1_2_11"/>
<dbReference type="Proteomes" id="UP000001685">
    <property type="component" value="Chromosome"/>
</dbReference>
<dbReference type="GO" id="GO:0015935">
    <property type="term" value="C:small ribosomal subunit"/>
    <property type="evidence" value="ECO:0007669"/>
    <property type="project" value="InterPro"/>
</dbReference>
<dbReference type="GO" id="GO:0019843">
    <property type="term" value="F:rRNA binding"/>
    <property type="evidence" value="ECO:0007669"/>
    <property type="project" value="UniProtKB-UniRule"/>
</dbReference>
<dbReference type="GO" id="GO:0003735">
    <property type="term" value="F:structural constituent of ribosome"/>
    <property type="evidence" value="ECO:0007669"/>
    <property type="project" value="InterPro"/>
</dbReference>
<dbReference type="GO" id="GO:0000049">
    <property type="term" value="F:tRNA binding"/>
    <property type="evidence" value="ECO:0007669"/>
    <property type="project" value="UniProtKB-UniRule"/>
</dbReference>
<dbReference type="GO" id="GO:0006412">
    <property type="term" value="P:translation"/>
    <property type="evidence" value="ECO:0007669"/>
    <property type="project" value="UniProtKB-UniRule"/>
</dbReference>
<dbReference type="CDD" id="cd03368">
    <property type="entry name" value="Ribosomal_S12"/>
    <property type="match status" value="1"/>
</dbReference>
<dbReference type="FunFam" id="2.40.50.140:FF:000001">
    <property type="entry name" value="30S ribosomal protein S12"/>
    <property type="match status" value="1"/>
</dbReference>
<dbReference type="Gene3D" id="2.40.50.140">
    <property type="entry name" value="Nucleic acid-binding proteins"/>
    <property type="match status" value="1"/>
</dbReference>
<dbReference type="HAMAP" id="MF_00403_B">
    <property type="entry name" value="Ribosomal_uS12_B"/>
    <property type="match status" value="1"/>
</dbReference>
<dbReference type="InterPro" id="IPR012340">
    <property type="entry name" value="NA-bd_OB-fold"/>
</dbReference>
<dbReference type="InterPro" id="IPR006032">
    <property type="entry name" value="Ribosomal_uS12"/>
</dbReference>
<dbReference type="InterPro" id="IPR005679">
    <property type="entry name" value="Ribosomal_uS12_bac"/>
</dbReference>
<dbReference type="NCBIfam" id="TIGR00981">
    <property type="entry name" value="rpsL_bact"/>
    <property type="match status" value="1"/>
</dbReference>
<dbReference type="PANTHER" id="PTHR11652">
    <property type="entry name" value="30S RIBOSOMAL PROTEIN S12 FAMILY MEMBER"/>
    <property type="match status" value="1"/>
</dbReference>
<dbReference type="Pfam" id="PF00164">
    <property type="entry name" value="Ribosom_S12_S23"/>
    <property type="match status" value="1"/>
</dbReference>
<dbReference type="PIRSF" id="PIRSF002133">
    <property type="entry name" value="Ribosomal_S12/S23"/>
    <property type="match status" value="1"/>
</dbReference>
<dbReference type="PRINTS" id="PR01034">
    <property type="entry name" value="RIBOSOMALS12"/>
</dbReference>
<dbReference type="SUPFAM" id="SSF50249">
    <property type="entry name" value="Nucleic acid-binding proteins"/>
    <property type="match status" value="1"/>
</dbReference>
<dbReference type="PROSITE" id="PS00055">
    <property type="entry name" value="RIBOSOMAL_S12"/>
    <property type="match status" value="1"/>
</dbReference>